<organism>
    <name type="scientific">Solibacter usitatus (strain Ellin6076)</name>
    <dbReference type="NCBI Taxonomy" id="234267"/>
    <lineage>
        <taxon>Bacteria</taxon>
        <taxon>Pseudomonadati</taxon>
        <taxon>Acidobacteriota</taxon>
        <taxon>Terriglobia</taxon>
        <taxon>Bryobacterales</taxon>
        <taxon>Solibacteraceae</taxon>
        <taxon>Candidatus Solibacter</taxon>
    </lineage>
</organism>
<feature type="chain" id="PRO_1000022887" description="2-C-methyl-D-erythritol 2,4-cyclodiphosphate synthase">
    <location>
        <begin position="1"/>
        <end position="159"/>
    </location>
</feature>
<feature type="binding site" evidence="1">
    <location>
        <begin position="11"/>
        <end position="13"/>
    </location>
    <ligand>
        <name>4-CDP-2-C-methyl-D-erythritol 2-phosphate</name>
        <dbReference type="ChEBI" id="CHEBI:57919"/>
    </ligand>
</feature>
<feature type="binding site" evidence="1">
    <location>
        <position position="11"/>
    </location>
    <ligand>
        <name>a divalent metal cation</name>
        <dbReference type="ChEBI" id="CHEBI:60240"/>
    </ligand>
</feature>
<feature type="binding site" evidence="1">
    <location>
        <position position="13"/>
    </location>
    <ligand>
        <name>a divalent metal cation</name>
        <dbReference type="ChEBI" id="CHEBI:60240"/>
    </ligand>
</feature>
<feature type="binding site" evidence="1">
    <location>
        <begin position="37"/>
        <end position="38"/>
    </location>
    <ligand>
        <name>4-CDP-2-C-methyl-D-erythritol 2-phosphate</name>
        <dbReference type="ChEBI" id="CHEBI:57919"/>
    </ligand>
</feature>
<feature type="binding site" evidence="1">
    <location>
        <position position="45"/>
    </location>
    <ligand>
        <name>a divalent metal cation</name>
        <dbReference type="ChEBI" id="CHEBI:60240"/>
    </ligand>
</feature>
<feature type="binding site" evidence="1">
    <location>
        <begin position="59"/>
        <end position="61"/>
    </location>
    <ligand>
        <name>4-CDP-2-C-methyl-D-erythritol 2-phosphate</name>
        <dbReference type="ChEBI" id="CHEBI:57919"/>
    </ligand>
</feature>
<feature type="binding site" evidence="1">
    <location>
        <begin position="64"/>
        <end position="68"/>
    </location>
    <ligand>
        <name>4-CDP-2-C-methyl-D-erythritol 2-phosphate</name>
        <dbReference type="ChEBI" id="CHEBI:57919"/>
    </ligand>
</feature>
<feature type="site" description="Transition state stabilizer" evidence="1">
    <location>
        <position position="37"/>
    </location>
</feature>
<feature type="site" description="Transition state stabilizer" evidence="1">
    <location>
        <position position="136"/>
    </location>
</feature>
<accession>Q027G2</accession>
<gene>
    <name evidence="1" type="primary">ispF</name>
    <name type="ordered locus">Acid_1861</name>
</gene>
<name>ISPF_SOLUE</name>
<dbReference type="EC" id="4.6.1.12" evidence="1"/>
<dbReference type="EMBL" id="CP000473">
    <property type="protein sequence ID" value="ABJ82851.1"/>
    <property type="molecule type" value="Genomic_DNA"/>
</dbReference>
<dbReference type="SMR" id="Q027G2"/>
<dbReference type="FunCoup" id="Q027G2">
    <property type="interactions" value="410"/>
</dbReference>
<dbReference type="STRING" id="234267.Acid_1861"/>
<dbReference type="KEGG" id="sus:Acid_1861"/>
<dbReference type="eggNOG" id="COG0245">
    <property type="taxonomic scope" value="Bacteria"/>
</dbReference>
<dbReference type="HOGENOM" id="CLU_084630_2_0_0"/>
<dbReference type="InParanoid" id="Q027G2"/>
<dbReference type="OrthoDB" id="9806837at2"/>
<dbReference type="UniPathway" id="UPA00056">
    <property type="reaction ID" value="UER00095"/>
</dbReference>
<dbReference type="GO" id="GO:0008685">
    <property type="term" value="F:2-C-methyl-D-erythritol 2,4-cyclodiphosphate synthase activity"/>
    <property type="evidence" value="ECO:0007669"/>
    <property type="project" value="UniProtKB-UniRule"/>
</dbReference>
<dbReference type="GO" id="GO:0046872">
    <property type="term" value="F:metal ion binding"/>
    <property type="evidence" value="ECO:0007669"/>
    <property type="project" value="UniProtKB-KW"/>
</dbReference>
<dbReference type="GO" id="GO:0019288">
    <property type="term" value="P:isopentenyl diphosphate biosynthetic process, methylerythritol 4-phosphate pathway"/>
    <property type="evidence" value="ECO:0007669"/>
    <property type="project" value="UniProtKB-UniRule"/>
</dbReference>
<dbReference type="GO" id="GO:0016114">
    <property type="term" value="P:terpenoid biosynthetic process"/>
    <property type="evidence" value="ECO:0007669"/>
    <property type="project" value="InterPro"/>
</dbReference>
<dbReference type="CDD" id="cd00554">
    <property type="entry name" value="MECDP_synthase"/>
    <property type="match status" value="1"/>
</dbReference>
<dbReference type="FunFam" id="3.30.1330.50:FF:000003">
    <property type="entry name" value="2-C-methyl-D-erythritol 2,4-cyclodiphosphate synthase"/>
    <property type="match status" value="1"/>
</dbReference>
<dbReference type="Gene3D" id="3.30.1330.50">
    <property type="entry name" value="2-C-methyl-D-erythritol 2,4-cyclodiphosphate synthase"/>
    <property type="match status" value="1"/>
</dbReference>
<dbReference type="HAMAP" id="MF_00107">
    <property type="entry name" value="IspF"/>
    <property type="match status" value="1"/>
</dbReference>
<dbReference type="InterPro" id="IPR003526">
    <property type="entry name" value="MECDP_synthase"/>
</dbReference>
<dbReference type="InterPro" id="IPR020555">
    <property type="entry name" value="MECDP_synthase_CS"/>
</dbReference>
<dbReference type="InterPro" id="IPR036571">
    <property type="entry name" value="MECDP_synthase_sf"/>
</dbReference>
<dbReference type="NCBIfam" id="TIGR00151">
    <property type="entry name" value="ispF"/>
    <property type="match status" value="1"/>
</dbReference>
<dbReference type="PANTHER" id="PTHR43181">
    <property type="entry name" value="2-C-METHYL-D-ERYTHRITOL 2,4-CYCLODIPHOSPHATE SYNTHASE, CHLOROPLASTIC"/>
    <property type="match status" value="1"/>
</dbReference>
<dbReference type="PANTHER" id="PTHR43181:SF1">
    <property type="entry name" value="2-C-METHYL-D-ERYTHRITOL 2,4-CYCLODIPHOSPHATE SYNTHASE, CHLOROPLASTIC"/>
    <property type="match status" value="1"/>
</dbReference>
<dbReference type="Pfam" id="PF02542">
    <property type="entry name" value="YgbB"/>
    <property type="match status" value="1"/>
</dbReference>
<dbReference type="SUPFAM" id="SSF69765">
    <property type="entry name" value="IpsF-like"/>
    <property type="match status" value="1"/>
</dbReference>
<dbReference type="PROSITE" id="PS01350">
    <property type="entry name" value="ISPF"/>
    <property type="match status" value="1"/>
</dbReference>
<sequence length="159" mass="17449">MSEIRTGLGWDVHRIATGRKMILGGVTVPCEFGLEGHSDADVLAHAITDAILGAAALGDIGMHFPDSDPRWKGCDSLVFLRHARDLATQKGYRIVNVDSTIILERPKLKDFRQTIRERLAETLELDVDRVSVKFKTAEKVGPVGEGRSAESQAIVTLEK</sequence>
<keyword id="KW-0414">Isoprene biosynthesis</keyword>
<keyword id="KW-0456">Lyase</keyword>
<keyword id="KW-0479">Metal-binding</keyword>
<proteinExistence type="inferred from homology"/>
<evidence type="ECO:0000255" key="1">
    <source>
        <dbReference type="HAMAP-Rule" id="MF_00107"/>
    </source>
</evidence>
<protein>
    <recommendedName>
        <fullName evidence="1">2-C-methyl-D-erythritol 2,4-cyclodiphosphate synthase</fullName>
        <shortName evidence="1">MECDP-synthase</shortName>
        <shortName evidence="1">MECPP-synthase</shortName>
        <shortName evidence="1">MECPS</shortName>
        <ecNumber evidence="1">4.6.1.12</ecNumber>
    </recommendedName>
</protein>
<reference key="1">
    <citation type="journal article" date="2009" name="Appl. Environ. Microbiol.">
        <title>Three genomes from the phylum Acidobacteria provide insight into the lifestyles of these microorganisms in soils.</title>
        <authorList>
            <person name="Ward N.L."/>
            <person name="Challacombe J.F."/>
            <person name="Janssen P.H."/>
            <person name="Henrissat B."/>
            <person name="Coutinho P.M."/>
            <person name="Wu M."/>
            <person name="Xie G."/>
            <person name="Haft D.H."/>
            <person name="Sait M."/>
            <person name="Badger J."/>
            <person name="Barabote R.D."/>
            <person name="Bradley B."/>
            <person name="Brettin T.S."/>
            <person name="Brinkac L.M."/>
            <person name="Bruce D."/>
            <person name="Creasy T."/>
            <person name="Daugherty S.C."/>
            <person name="Davidsen T.M."/>
            <person name="DeBoy R.T."/>
            <person name="Detter J.C."/>
            <person name="Dodson R.J."/>
            <person name="Durkin A.S."/>
            <person name="Ganapathy A."/>
            <person name="Gwinn-Giglio M."/>
            <person name="Han C.S."/>
            <person name="Khouri H."/>
            <person name="Kiss H."/>
            <person name="Kothari S.P."/>
            <person name="Madupu R."/>
            <person name="Nelson K.E."/>
            <person name="Nelson W.C."/>
            <person name="Paulsen I."/>
            <person name="Penn K."/>
            <person name="Ren Q."/>
            <person name="Rosovitz M.J."/>
            <person name="Selengut J.D."/>
            <person name="Shrivastava S."/>
            <person name="Sullivan S.A."/>
            <person name="Tapia R."/>
            <person name="Thompson L.S."/>
            <person name="Watkins K.L."/>
            <person name="Yang Q."/>
            <person name="Yu C."/>
            <person name="Zafar N."/>
            <person name="Zhou L."/>
            <person name="Kuske C.R."/>
        </authorList>
    </citation>
    <scope>NUCLEOTIDE SEQUENCE [LARGE SCALE GENOMIC DNA]</scope>
    <source>
        <strain>Ellin6076</strain>
    </source>
</reference>
<comment type="function">
    <text evidence="1">Involved in the biosynthesis of isopentenyl diphosphate (IPP) and dimethylallyl diphosphate (DMAPP), two major building blocks of isoprenoid compounds. Catalyzes the conversion of 4-diphosphocytidyl-2-C-methyl-D-erythritol 2-phosphate (CDP-ME2P) to 2-C-methyl-D-erythritol 2,4-cyclodiphosphate (ME-CPP) with a corresponding release of cytidine 5-monophosphate (CMP).</text>
</comment>
<comment type="catalytic activity">
    <reaction evidence="1">
        <text>4-CDP-2-C-methyl-D-erythritol 2-phosphate = 2-C-methyl-D-erythritol 2,4-cyclic diphosphate + CMP</text>
        <dbReference type="Rhea" id="RHEA:23864"/>
        <dbReference type="ChEBI" id="CHEBI:57919"/>
        <dbReference type="ChEBI" id="CHEBI:58483"/>
        <dbReference type="ChEBI" id="CHEBI:60377"/>
        <dbReference type="EC" id="4.6.1.12"/>
    </reaction>
</comment>
<comment type="cofactor">
    <cofactor evidence="1">
        <name>a divalent metal cation</name>
        <dbReference type="ChEBI" id="CHEBI:60240"/>
    </cofactor>
    <text evidence="1">Binds 1 divalent metal cation per subunit.</text>
</comment>
<comment type="pathway">
    <text evidence="1">Isoprenoid biosynthesis; isopentenyl diphosphate biosynthesis via DXP pathway; isopentenyl diphosphate from 1-deoxy-D-xylulose 5-phosphate: step 4/6.</text>
</comment>
<comment type="subunit">
    <text evidence="1">Homotrimer.</text>
</comment>
<comment type="similarity">
    <text evidence="1">Belongs to the IspF family.</text>
</comment>